<gene>
    <name evidence="1" type="primary">rplX</name>
    <name type="ordered locus">Rmag_0176</name>
</gene>
<name>RL24_RUTMC</name>
<reference key="1">
    <citation type="journal article" date="2007" name="Science">
        <title>The Calyptogena magnifica chemoautotrophic symbiont genome.</title>
        <authorList>
            <person name="Newton I.L.G."/>
            <person name="Woyke T."/>
            <person name="Auchtung T.A."/>
            <person name="Dilly G.F."/>
            <person name="Dutton R.J."/>
            <person name="Fisher M.C."/>
            <person name="Fontanez K.M."/>
            <person name="Lau E."/>
            <person name="Stewart F.J."/>
            <person name="Richardson P.M."/>
            <person name="Barry K.W."/>
            <person name="Saunders E."/>
            <person name="Detter J.C."/>
            <person name="Wu D."/>
            <person name="Eisen J.A."/>
            <person name="Cavanaugh C.M."/>
        </authorList>
    </citation>
    <scope>NUCLEOTIDE SEQUENCE [LARGE SCALE GENOMIC DNA]</scope>
</reference>
<proteinExistence type="inferred from homology"/>
<protein>
    <recommendedName>
        <fullName evidence="1">Large ribosomal subunit protein uL24</fullName>
    </recommendedName>
    <alternativeName>
        <fullName evidence="2">50S ribosomal protein L24</fullName>
    </alternativeName>
</protein>
<dbReference type="EMBL" id="CP000488">
    <property type="protein sequence ID" value="ABL01968.1"/>
    <property type="molecule type" value="Genomic_DNA"/>
</dbReference>
<dbReference type="RefSeq" id="WP_011737594.1">
    <property type="nucleotide sequence ID" value="NC_008610.1"/>
</dbReference>
<dbReference type="SMR" id="A1AVL1"/>
<dbReference type="STRING" id="413404.Rmag_0176"/>
<dbReference type="KEGG" id="rma:Rmag_0176"/>
<dbReference type="eggNOG" id="COG0198">
    <property type="taxonomic scope" value="Bacteria"/>
</dbReference>
<dbReference type="HOGENOM" id="CLU_093315_2_2_6"/>
<dbReference type="OrthoDB" id="9807419at2"/>
<dbReference type="Proteomes" id="UP000002587">
    <property type="component" value="Chromosome"/>
</dbReference>
<dbReference type="GO" id="GO:1990904">
    <property type="term" value="C:ribonucleoprotein complex"/>
    <property type="evidence" value="ECO:0007669"/>
    <property type="project" value="UniProtKB-KW"/>
</dbReference>
<dbReference type="GO" id="GO:0005840">
    <property type="term" value="C:ribosome"/>
    <property type="evidence" value="ECO:0007669"/>
    <property type="project" value="UniProtKB-KW"/>
</dbReference>
<dbReference type="GO" id="GO:0019843">
    <property type="term" value="F:rRNA binding"/>
    <property type="evidence" value="ECO:0007669"/>
    <property type="project" value="UniProtKB-UniRule"/>
</dbReference>
<dbReference type="GO" id="GO:0003735">
    <property type="term" value="F:structural constituent of ribosome"/>
    <property type="evidence" value="ECO:0007669"/>
    <property type="project" value="InterPro"/>
</dbReference>
<dbReference type="GO" id="GO:0006412">
    <property type="term" value="P:translation"/>
    <property type="evidence" value="ECO:0007669"/>
    <property type="project" value="UniProtKB-UniRule"/>
</dbReference>
<dbReference type="CDD" id="cd06089">
    <property type="entry name" value="KOW_RPL26"/>
    <property type="match status" value="1"/>
</dbReference>
<dbReference type="Gene3D" id="2.30.30.30">
    <property type="match status" value="1"/>
</dbReference>
<dbReference type="HAMAP" id="MF_01326_B">
    <property type="entry name" value="Ribosomal_uL24_B"/>
    <property type="match status" value="1"/>
</dbReference>
<dbReference type="InterPro" id="IPR005824">
    <property type="entry name" value="KOW"/>
</dbReference>
<dbReference type="InterPro" id="IPR014722">
    <property type="entry name" value="Rib_uL2_dom2"/>
</dbReference>
<dbReference type="InterPro" id="IPR003256">
    <property type="entry name" value="Ribosomal_uL24"/>
</dbReference>
<dbReference type="InterPro" id="IPR041988">
    <property type="entry name" value="Ribosomal_uL24_KOW"/>
</dbReference>
<dbReference type="InterPro" id="IPR008991">
    <property type="entry name" value="Translation_prot_SH3-like_sf"/>
</dbReference>
<dbReference type="NCBIfam" id="TIGR01079">
    <property type="entry name" value="rplX_bact"/>
    <property type="match status" value="1"/>
</dbReference>
<dbReference type="PANTHER" id="PTHR12903">
    <property type="entry name" value="MITOCHONDRIAL RIBOSOMAL PROTEIN L24"/>
    <property type="match status" value="1"/>
</dbReference>
<dbReference type="Pfam" id="PF00467">
    <property type="entry name" value="KOW"/>
    <property type="match status" value="1"/>
</dbReference>
<dbReference type="Pfam" id="PF17136">
    <property type="entry name" value="ribosomal_L24"/>
    <property type="match status" value="1"/>
</dbReference>
<dbReference type="SMART" id="SM00739">
    <property type="entry name" value="KOW"/>
    <property type="match status" value="1"/>
</dbReference>
<dbReference type="SUPFAM" id="SSF50104">
    <property type="entry name" value="Translation proteins SH3-like domain"/>
    <property type="match status" value="1"/>
</dbReference>
<sequence length="103" mass="11144">MKKIKLNDEVIIITGKNKDSTGAVIKVLDSKVLVEGLNLAKKHVRSNPNAGVTGGITEIEVPLAVSNVAIYNSATKKADRVGIRTNKDGIKERFFKSNNEVIV</sequence>
<comment type="function">
    <text evidence="1">One of two assembly initiator proteins, it binds directly to the 5'-end of the 23S rRNA, where it nucleates assembly of the 50S subunit.</text>
</comment>
<comment type="function">
    <text evidence="1">One of the proteins that surrounds the polypeptide exit tunnel on the outside of the subunit.</text>
</comment>
<comment type="subunit">
    <text evidence="1">Part of the 50S ribosomal subunit.</text>
</comment>
<comment type="similarity">
    <text evidence="1">Belongs to the universal ribosomal protein uL24 family.</text>
</comment>
<feature type="chain" id="PRO_1000052300" description="Large ribosomal subunit protein uL24">
    <location>
        <begin position="1"/>
        <end position="103"/>
    </location>
</feature>
<accession>A1AVL1</accession>
<keyword id="KW-0687">Ribonucleoprotein</keyword>
<keyword id="KW-0689">Ribosomal protein</keyword>
<keyword id="KW-0694">RNA-binding</keyword>
<keyword id="KW-0699">rRNA-binding</keyword>
<evidence type="ECO:0000255" key="1">
    <source>
        <dbReference type="HAMAP-Rule" id="MF_01326"/>
    </source>
</evidence>
<evidence type="ECO:0000305" key="2"/>
<organism>
    <name type="scientific">Ruthia magnifica subsp. Calyptogena magnifica</name>
    <dbReference type="NCBI Taxonomy" id="413404"/>
    <lineage>
        <taxon>Bacteria</taxon>
        <taxon>Pseudomonadati</taxon>
        <taxon>Pseudomonadota</taxon>
        <taxon>Gammaproteobacteria</taxon>
        <taxon>Candidatus Pseudothioglobaceae</taxon>
        <taxon>Candidatus Ruthturnera</taxon>
    </lineage>
</organism>